<proteinExistence type="inferred from homology"/>
<dbReference type="EMBL" id="CP001120">
    <property type="protein sequence ID" value="ACF66324.1"/>
    <property type="molecule type" value="Genomic_DNA"/>
</dbReference>
<dbReference type="RefSeq" id="WP_000057285.1">
    <property type="nucleotide sequence ID" value="NC_011083.1"/>
</dbReference>
<dbReference type="SMR" id="B4TIY8"/>
<dbReference type="KEGG" id="seh:SeHA_C3560"/>
<dbReference type="HOGENOM" id="CLU_115353_1_0_6"/>
<dbReference type="Proteomes" id="UP000001866">
    <property type="component" value="Chromosome"/>
</dbReference>
<dbReference type="GO" id="GO:0003676">
    <property type="term" value="F:nucleic acid binding"/>
    <property type="evidence" value="ECO:0007669"/>
    <property type="project" value="InterPro"/>
</dbReference>
<dbReference type="CDD" id="cd20736">
    <property type="entry name" value="PoNe_Nuclease"/>
    <property type="match status" value="1"/>
</dbReference>
<dbReference type="Gene3D" id="3.40.1350.10">
    <property type="match status" value="1"/>
</dbReference>
<dbReference type="HAMAP" id="MF_00048">
    <property type="entry name" value="UPF0102"/>
    <property type="match status" value="1"/>
</dbReference>
<dbReference type="InterPro" id="IPR011335">
    <property type="entry name" value="Restrct_endonuc-II-like"/>
</dbReference>
<dbReference type="InterPro" id="IPR011856">
    <property type="entry name" value="tRNA_endonuc-like_dom_sf"/>
</dbReference>
<dbReference type="InterPro" id="IPR003509">
    <property type="entry name" value="UPF0102_YraN-like"/>
</dbReference>
<dbReference type="NCBIfam" id="NF009150">
    <property type="entry name" value="PRK12497.1-3"/>
    <property type="match status" value="1"/>
</dbReference>
<dbReference type="NCBIfam" id="TIGR00252">
    <property type="entry name" value="YraN family protein"/>
    <property type="match status" value="1"/>
</dbReference>
<dbReference type="PANTHER" id="PTHR34039">
    <property type="entry name" value="UPF0102 PROTEIN YRAN"/>
    <property type="match status" value="1"/>
</dbReference>
<dbReference type="PANTHER" id="PTHR34039:SF1">
    <property type="entry name" value="UPF0102 PROTEIN YRAN"/>
    <property type="match status" value="1"/>
</dbReference>
<dbReference type="Pfam" id="PF02021">
    <property type="entry name" value="UPF0102"/>
    <property type="match status" value="1"/>
</dbReference>
<dbReference type="SUPFAM" id="SSF52980">
    <property type="entry name" value="Restriction endonuclease-like"/>
    <property type="match status" value="1"/>
</dbReference>
<name>YRAN_SALHS</name>
<accession>B4TIY8</accession>
<evidence type="ECO:0000255" key="1">
    <source>
        <dbReference type="HAMAP-Rule" id="MF_00048"/>
    </source>
</evidence>
<organism>
    <name type="scientific">Salmonella heidelberg (strain SL476)</name>
    <dbReference type="NCBI Taxonomy" id="454169"/>
    <lineage>
        <taxon>Bacteria</taxon>
        <taxon>Pseudomonadati</taxon>
        <taxon>Pseudomonadota</taxon>
        <taxon>Gammaproteobacteria</taxon>
        <taxon>Enterobacterales</taxon>
        <taxon>Enterobacteriaceae</taxon>
        <taxon>Salmonella</taxon>
    </lineage>
</organism>
<reference key="1">
    <citation type="journal article" date="2011" name="J. Bacteriol.">
        <title>Comparative genomics of 28 Salmonella enterica isolates: evidence for CRISPR-mediated adaptive sublineage evolution.</title>
        <authorList>
            <person name="Fricke W.F."/>
            <person name="Mammel M.K."/>
            <person name="McDermott P.F."/>
            <person name="Tartera C."/>
            <person name="White D.G."/>
            <person name="Leclerc J.E."/>
            <person name="Ravel J."/>
            <person name="Cebula T.A."/>
        </authorList>
    </citation>
    <scope>NUCLEOTIDE SEQUENCE [LARGE SCALE GENOMIC DNA]</scope>
    <source>
        <strain>SL476</strain>
    </source>
</reference>
<feature type="chain" id="PRO_1000091261" description="UPF0102 protein YraN">
    <location>
        <begin position="1"/>
        <end position="131"/>
    </location>
</feature>
<sequence>MAQIPARGDCSRQLTRKQAGDAWEAAARRWLESKGLRFIAANVRERGGEIDLIMRDGKTTVFVEVRYRRSGLYGGAAASVTRSKQHKLLHTARLWLARQNGSFDTVDCRFDVLAFTGNEIEWFRDAFNDHS</sequence>
<comment type="similarity">
    <text evidence="1">Belongs to the UPF0102 family.</text>
</comment>
<gene>
    <name evidence="1" type="primary">yraN</name>
    <name type="ordered locus">SeHA_C3560</name>
</gene>
<protein>
    <recommendedName>
        <fullName evidence="1">UPF0102 protein YraN</fullName>
    </recommendedName>
</protein>